<gene>
    <name type="primary">kin-18</name>
    <name type="synonym">sulu</name>
    <name type="ORF">T17E9.1</name>
</gene>
<protein>
    <recommendedName>
        <fullName>Serine/threonine-protein kinase SULU</fullName>
        <ecNumber evidence="1">2.7.11.1</ecNumber>
    </recommendedName>
    <alternativeName>
        <fullName>Protein kinase 18</fullName>
    </alternativeName>
</protein>
<keyword id="KW-0025">Alternative splicing</keyword>
<keyword id="KW-0067">ATP-binding</keyword>
<keyword id="KW-0963">Cytoplasm</keyword>
<keyword id="KW-0206">Cytoskeleton</keyword>
<keyword id="KW-0418">Kinase</keyword>
<keyword id="KW-0460">Magnesium</keyword>
<keyword id="KW-0479">Metal-binding</keyword>
<keyword id="KW-0547">Nucleotide-binding</keyword>
<keyword id="KW-1185">Reference proteome</keyword>
<keyword id="KW-0723">Serine/threonine-protein kinase</keyword>
<keyword id="KW-0808">Transferase</keyword>
<accession>P46549</accession>
<accession>Q8MPX1</accession>
<reference key="1">
    <citation type="submission" date="1995-07" db="EMBL/GenBank/DDBJ databases">
        <authorList>
            <person name="Cope M.J.T.V."/>
            <person name="Kendrick-Jones A."/>
        </authorList>
    </citation>
    <scope>NUCLEOTIDE SEQUENCE [MRNA] (ISOFORM A)</scope>
    <source>
        <strain>Bristol N2</strain>
    </source>
</reference>
<reference key="2">
    <citation type="journal article" date="1998" name="Science">
        <title>Genome sequence of the nematode C. elegans: a platform for investigating biology.</title>
        <authorList>
            <consortium name="The C. elegans sequencing consortium"/>
        </authorList>
    </citation>
    <scope>NUCLEOTIDE SEQUENCE [LARGE SCALE GENOMIC DNA]</scope>
    <scope>ALTERNATIVE SPLICING</scope>
    <source>
        <strain>Bristol N2</strain>
    </source>
</reference>
<reference key="3">
    <citation type="journal article" date="2001" name="Gene">
        <title>kin-18, a C. elegans protein kinase involved in feeding.</title>
        <authorList>
            <person name="Berman K.S."/>
            <person name="Hutchison M."/>
            <person name="Avery L."/>
            <person name="Cobb M.H."/>
        </authorList>
    </citation>
    <scope>FUNCTION</scope>
    <scope>TISSUE SPECIFICITY</scope>
    <scope>DEVELOPMENTAL STAGE</scope>
</reference>
<reference key="4">
    <citation type="journal article" date="2013" name="Dev. Biol.">
        <title>The TAO kinase KIN-18 regulates contractility and establishment of polarity in the C. elegans embryo.</title>
        <authorList>
            <person name="Spiga F.M."/>
            <person name="Prouteau M."/>
            <person name="Gotta M."/>
        </authorList>
    </citation>
    <scope>FUNCTION</scope>
    <scope>SUBCELLULAR LOCATION</scope>
    <scope>DEVELOPMENTAL STAGE</scope>
    <scope>DISRUPTION PHENOTYPE</scope>
</reference>
<reference key="5">
    <citation type="journal article" date="2016" name="Genetics">
        <title>Coordination of Recombination with Meiotic Progression in the Caenorhabditis elegans Germline by KIN-18, a TAO Kinase That Regulates the Timing of MPK-1 Signaling.</title>
        <authorList>
            <person name="Yin Y."/>
            <person name="Donlevy S."/>
            <person name="Smolikove S."/>
        </authorList>
    </citation>
    <scope>FUNCTION</scope>
    <scope>MUTAGENESIS OF 47-ALA--THR-642</scope>
</reference>
<name>SULU_CAEEL</name>
<feature type="chain" id="PRO_0000086726" description="Serine/threonine-protein kinase SULU">
    <location>
        <begin position="1"/>
        <end position="982"/>
    </location>
</feature>
<feature type="domain" description="Protein kinase" evidence="2">
    <location>
        <begin position="30"/>
        <end position="289"/>
    </location>
</feature>
<feature type="region of interest" description="Disordered" evidence="3">
    <location>
        <begin position="331"/>
        <end position="484"/>
    </location>
</feature>
<feature type="region of interest" description="Disordered" evidence="3">
    <location>
        <begin position="592"/>
        <end position="620"/>
    </location>
</feature>
<feature type="region of interest" description="Disordered" evidence="3">
    <location>
        <begin position="751"/>
        <end position="789"/>
    </location>
</feature>
<feature type="region of interest" description="Disordered" evidence="3">
    <location>
        <begin position="957"/>
        <end position="982"/>
    </location>
</feature>
<feature type="compositionally biased region" description="Low complexity" evidence="3">
    <location>
        <begin position="353"/>
        <end position="373"/>
    </location>
</feature>
<feature type="compositionally biased region" description="Polar residues" evidence="3">
    <location>
        <begin position="421"/>
        <end position="431"/>
    </location>
</feature>
<feature type="compositionally biased region" description="Low complexity" evidence="3">
    <location>
        <begin position="459"/>
        <end position="472"/>
    </location>
</feature>
<feature type="compositionally biased region" description="Basic and acidic residues" evidence="3">
    <location>
        <begin position="595"/>
        <end position="608"/>
    </location>
</feature>
<feature type="compositionally biased region" description="Polar residues" evidence="3">
    <location>
        <begin position="759"/>
        <end position="768"/>
    </location>
</feature>
<feature type="compositionally biased region" description="Low complexity" evidence="3">
    <location>
        <begin position="957"/>
        <end position="967"/>
    </location>
</feature>
<feature type="compositionally biased region" description="Polar residues" evidence="3">
    <location>
        <begin position="973"/>
        <end position="982"/>
    </location>
</feature>
<feature type="active site" description="Proton acceptor" evidence="2">
    <location>
        <position position="153"/>
    </location>
</feature>
<feature type="binding site" evidence="2">
    <location>
        <begin position="36"/>
        <end position="44"/>
    </location>
    <ligand>
        <name>ATP</name>
        <dbReference type="ChEBI" id="CHEBI:30616"/>
    </ligand>
</feature>
<feature type="binding site" evidence="2">
    <location>
        <position position="59"/>
    </location>
    <ligand>
        <name>ATP</name>
        <dbReference type="ChEBI" id="CHEBI:30616"/>
    </ligand>
</feature>
<feature type="splice variant" id="VSP_020524" description="In isoform b." evidence="7">
    <original>ANS</original>
    <variation>NHG</variation>
    <location>
        <begin position="351"/>
        <end position="353"/>
    </location>
</feature>
<feature type="splice variant" id="VSP_020525" description="In isoform b." evidence="7">
    <location>
        <begin position="354"/>
        <end position="982"/>
    </location>
</feature>
<feature type="mutagenesis site" description="In ok395; accelerated prophase I progression, aberrant oocyte development and ectopic apoptosis in the germline. Shorter gonads, reduction in nuclei, increase in mitotic index, decrease in early meiotic nuclei and sterility. Increase in and premature chromosomal loading of rad-51 and cosa-1 during meiosis. Increased and ectopic phosphorylation levels of mapk-1 (isoform a)." evidence="6">
    <location>
        <begin position="47"/>
        <end position="642"/>
    </location>
</feature>
<dbReference type="EC" id="2.7.11.1" evidence="1"/>
<dbReference type="EMBL" id="U32275">
    <property type="protein sequence ID" value="AAA75370.1"/>
    <property type="molecule type" value="mRNA"/>
</dbReference>
<dbReference type="EMBL" id="FO080363">
    <property type="protein sequence ID" value="CCD63180.1"/>
    <property type="molecule type" value="Genomic_DNA"/>
</dbReference>
<dbReference type="EMBL" id="FO080363">
    <property type="protein sequence ID" value="CCD63181.1"/>
    <property type="molecule type" value="Genomic_DNA"/>
</dbReference>
<dbReference type="PIR" id="T18576">
    <property type="entry name" value="T18576"/>
</dbReference>
<dbReference type="RefSeq" id="NP_001022767.1">
    <molecule id="P46549-1"/>
    <property type="nucleotide sequence ID" value="NM_001027596.5"/>
</dbReference>
<dbReference type="RefSeq" id="NP_741172.2">
    <property type="nucleotide sequence ID" value="NM_171151.3"/>
</dbReference>
<dbReference type="SMR" id="P46549"/>
<dbReference type="BioGRID" id="41083">
    <property type="interactions" value="13"/>
</dbReference>
<dbReference type="FunCoup" id="P46549">
    <property type="interactions" value="1898"/>
</dbReference>
<dbReference type="STRING" id="6239.T17E9.1a.1"/>
<dbReference type="ChEMBL" id="CHEMBL5197"/>
<dbReference type="iPTMnet" id="P46549"/>
<dbReference type="PaxDb" id="6239-T17E9.1a.2"/>
<dbReference type="PeptideAtlas" id="P46549"/>
<dbReference type="EnsemblMetazoa" id="T17E9.1a.1">
    <molecule id="P46549-1"/>
    <property type="protein sequence ID" value="T17E9.1a.1"/>
    <property type="gene ID" value="WBGene00002201"/>
</dbReference>
<dbReference type="EnsemblMetazoa" id="T17E9.1b.1">
    <property type="protein sequence ID" value="T17E9.1b.1"/>
    <property type="gene ID" value="WBGene00002201"/>
</dbReference>
<dbReference type="GeneID" id="175862"/>
<dbReference type="KEGG" id="cel:CELE_T17E9.1"/>
<dbReference type="UCSC" id="T17E9.1a">
    <molecule id="P46549-1"/>
    <property type="organism name" value="c. elegans"/>
</dbReference>
<dbReference type="AGR" id="WB:WBGene00002201"/>
<dbReference type="CTD" id="175862"/>
<dbReference type="WormBase" id="T17E9.1a">
    <molecule id="P46549-1"/>
    <property type="protein sequence ID" value="CE01405"/>
    <property type="gene ID" value="WBGene00002201"/>
    <property type="gene designation" value="kin-18"/>
</dbReference>
<dbReference type="WormBase" id="T17E9.1b">
    <molecule id="P46549-2"/>
    <property type="protein sequence ID" value="CE32936"/>
    <property type="gene ID" value="WBGene00002201"/>
    <property type="gene designation" value="kin-18"/>
</dbReference>
<dbReference type="eggNOG" id="KOG0577">
    <property type="taxonomic scope" value="Eukaryota"/>
</dbReference>
<dbReference type="GeneTree" id="ENSGT00940000168060"/>
<dbReference type="HOGENOM" id="CLU_000288_2_2_1"/>
<dbReference type="InParanoid" id="P46549"/>
<dbReference type="OMA" id="QKKEYKH"/>
<dbReference type="OrthoDB" id="10016527at2759"/>
<dbReference type="PhylomeDB" id="P46549"/>
<dbReference type="Reactome" id="R-CEL-9013149">
    <property type="pathway name" value="RAC1 GTPase cycle"/>
</dbReference>
<dbReference type="Reactome" id="R-CEL-9013404">
    <property type="pathway name" value="RAC2 GTPase cycle"/>
</dbReference>
<dbReference type="Reactome" id="R-CEL-9013423">
    <property type="pathway name" value="RAC3 GTPase cycle"/>
</dbReference>
<dbReference type="PRO" id="PR:P46549"/>
<dbReference type="Proteomes" id="UP000001940">
    <property type="component" value="Chromosome III"/>
</dbReference>
<dbReference type="Bgee" id="WBGene00002201">
    <property type="expression patterns" value="Expressed in germ line (C elegans) and 4 other cell types or tissues"/>
</dbReference>
<dbReference type="GO" id="GO:0005938">
    <property type="term" value="C:cell cortex"/>
    <property type="evidence" value="ECO:0000314"/>
    <property type="project" value="WormBase"/>
</dbReference>
<dbReference type="GO" id="GO:0005737">
    <property type="term" value="C:cytoplasm"/>
    <property type="evidence" value="ECO:0000314"/>
    <property type="project" value="WormBase"/>
</dbReference>
<dbReference type="GO" id="GO:0005856">
    <property type="term" value="C:cytoskeleton"/>
    <property type="evidence" value="ECO:0007669"/>
    <property type="project" value="UniProtKB-SubCell"/>
</dbReference>
<dbReference type="GO" id="GO:0005524">
    <property type="term" value="F:ATP binding"/>
    <property type="evidence" value="ECO:0007669"/>
    <property type="project" value="UniProtKB-KW"/>
</dbReference>
<dbReference type="GO" id="GO:0046872">
    <property type="term" value="F:metal ion binding"/>
    <property type="evidence" value="ECO:0007669"/>
    <property type="project" value="UniProtKB-KW"/>
</dbReference>
<dbReference type="GO" id="GO:0106310">
    <property type="term" value="F:protein serine kinase activity"/>
    <property type="evidence" value="ECO:0007669"/>
    <property type="project" value="RHEA"/>
</dbReference>
<dbReference type="GO" id="GO:0004674">
    <property type="term" value="F:protein serine/threonine kinase activity"/>
    <property type="evidence" value="ECO:0000318"/>
    <property type="project" value="GO_Central"/>
</dbReference>
<dbReference type="GO" id="GO:0007631">
    <property type="term" value="P:feeding behavior"/>
    <property type="evidence" value="ECO:0000315"/>
    <property type="project" value="WormBase"/>
</dbReference>
<dbReference type="GO" id="GO:0000165">
    <property type="term" value="P:MAPK cascade"/>
    <property type="evidence" value="ECO:0000318"/>
    <property type="project" value="GO_Central"/>
</dbReference>
<dbReference type="GO" id="GO:0048812">
    <property type="term" value="P:neuron projection morphogenesis"/>
    <property type="evidence" value="ECO:0000318"/>
    <property type="project" value="GO_Central"/>
</dbReference>
<dbReference type="GO" id="GO:0043408">
    <property type="term" value="P:regulation of MAPK cascade"/>
    <property type="evidence" value="ECO:0000318"/>
    <property type="project" value="GO_Central"/>
</dbReference>
<dbReference type="GO" id="GO:0060631">
    <property type="term" value="P:regulation of meiosis I"/>
    <property type="evidence" value="ECO:0000315"/>
    <property type="project" value="WormBase"/>
</dbReference>
<dbReference type="GO" id="GO:0043051">
    <property type="term" value="P:regulation of nematode pharyngeal pumping"/>
    <property type="evidence" value="ECO:0000315"/>
    <property type="project" value="WormBase"/>
</dbReference>
<dbReference type="FunFam" id="1.10.510.10:FF:000877">
    <property type="entry name" value="TAO kinase 2"/>
    <property type="match status" value="1"/>
</dbReference>
<dbReference type="Gene3D" id="3.30.200.20">
    <property type="entry name" value="Phosphorylase Kinase, domain 1"/>
    <property type="match status" value="1"/>
</dbReference>
<dbReference type="Gene3D" id="1.10.510.10">
    <property type="entry name" value="Transferase(Phosphotransferase) domain 1"/>
    <property type="match status" value="1"/>
</dbReference>
<dbReference type="InterPro" id="IPR011009">
    <property type="entry name" value="Kinase-like_dom_sf"/>
</dbReference>
<dbReference type="InterPro" id="IPR000719">
    <property type="entry name" value="Prot_kinase_dom"/>
</dbReference>
<dbReference type="InterPro" id="IPR017441">
    <property type="entry name" value="Protein_kinase_ATP_BS"/>
</dbReference>
<dbReference type="InterPro" id="IPR051234">
    <property type="entry name" value="TAO_STE20_kinase"/>
</dbReference>
<dbReference type="PANTHER" id="PTHR47167">
    <property type="entry name" value="SERINE/THREONINE-PROTEIN KINASE TAO1-LIKE PROTEIN"/>
    <property type="match status" value="1"/>
</dbReference>
<dbReference type="PANTHER" id="PTHR47167:SF4">
    <property type="entry name" value="SERINE_THREONINE-PROTEIN KINASE TAO"/>
    <property type="match status" value="1"/>
</dbReference>
<dbReference type="Pfam" id="PF00069">
    <property type="entry name" value="Pkinase"/>
    <property type="match status" value="1"/>
</dbReference>
<dbReference type="SMART" id="SM00220">
    <property type="entry name" value="S_TKc"/>
    <property type="match status" value="1"/>
</dbReference>
<dbReference type="SUPFAM" id="SSF56112">
    <property type="entry name" value="Protein kinase-like (PK-like)"/>
    <property type="match status" value="1"/>
</dbReference>
<dbReference type="PROSITE" id="PS00107">
    <property type="entry name" value="PROTEIN_KINASE_ATP"/>
    <property type="match status" value="1"/>
</dbReference>
<dbReference type="PROSITE" id="PS50011">
    <property type="entry name" value="PROTEIN_KINASE_DOM"/>
    <property type="match status" value="1"/>
</dbReference>
<proteinExistence type="evidence at protein level"/>
<comment type="function">
    <text evidence="4 5 6">Acts as a negative regulator of cortical contractions during early embryonic cell division, possibly by regulating rho-1-dependent actomyosin contractility (PubMed:23064028). Plays a role in polarity establishment in early embryos by regulating the size of the anterior and posterior cortex in the first asymmetric cell division (PubMed:23064028). Might play a role in cell cycle progression (PubMed:23064028). In the germline, involved in the regulation of meiotic progression during oogenesis, possibly by modulating the timing of mpk-1 activation (PubMed:26510792). Plays a role in meiotic recombination events (PubMed:26510792). Involved in pharyngeal pumping (PubMed:11733138).</text>
</comment>
<comment type="catalytic activity">
    <reaction evidence="1">
        <text>L-seryl-[protein] + ATP = O-phospho-L-seryl-[protein] + ADP + H(+)</text>
        <dbReference type="Rhea" id="RHEA:17989"/>
        <dbReference type="Rhea" id="RHEA-COMP:9863"/>
        <dbReference type="Rhea" id="RHEA-COMP:11604"/>
        <dbReference type="ChEBI" id="CHEBI:15378"/>
        <dbReference type="ChEBI" id="CHEBI:29999"/>
        <dbReference type="ChEBI" id="CHEBI:30616"/>
        <dbReference type="ChEBI" id="CHEBI:83421"/>
        <dbReference type="ChEBI" id="CHEBI:456216"/>
        <dbReference type="EC" id="2.7.11.1"/>
    </reaction>
</comment>
<comment type="catalytic activity">
    <reaction evidence="1">
        <text>L-threonyl-[protein] + ATP = O-phospho-L-threonyl-[protein] + ADP + H(+)</text>
        <dbReference type="Rhea" id="RHEA:46608"/>
        <dbReference type="Rhea" id="RHEA-COMP:11060"/>
        <dbReference type="Rhea" id="RHEA-COMP:11605"/>
        <dbReference type="ChEBI" id="CHEBI:15378"/>
        <dbReference type="ChEBI" id="CHEBI:30013"/>
        <dbReference type="ChEBI" id="CHEBI:30616"/>
        <dbReference type="ChEBI" id="CHEBI:61977"/>
        <dbReference type="ChEBI" id="CHEBI:456216"/>
        <dbReference type="EC" id="2.7.11.1"/>
    </reaction>
</comment>
<comment type="cofactor">
    <cofactor evidence="1">
        <name>Mg(2+)</name>
        <dbReference type="ChEBI" id="CHEBI:18420"/>
    </cofactor>
</comment>
<comment type="subcellular location">
    <subcellularLocation>
        <location evidence="5">Cytoplasm</location>
        <location evidence="5">Cytoskeleton</location>
    </subcellularLocation>
    <subcellularLocation>
        <location evidence="5">Cytoplasm</location>
        <location evidence="5">Cell cortex</location>
    </subcellularLocation>
    <text evidence="5">Localized to the anterior cortex in embryos; localization to the anterior cortex depends on par-3 and rho-1.</text>
</comment>
<comment type="alternative products">
    <event type="alternative splicing"/>
    <isoform>
        <id>P46549-1</id>
        <name>a</name>
        <sequence type="displayed"/>
    </isoform>
    <isoform>
        <id>P46549-2</id>
        <name>b</name>
        <sequence type="described" ref="VSP_020524 VSP_020525"/>
    </isoform>
</comment>
<comment type="tissue specificity">
    <text evidence="4">Expressed in the pharynx, including the pharyngeal muscle of the metacorpus, the isthmus, and the terminal bulb; in the intestine, including the pharyngeointestinal valve between the pharynx and the intestine, a structure near the anus likely to be the anal sphincter and the excretory cell and in several ring neurons.</text>
</comment>
<comment type="developmental stage">
    <text evidence="4 5">Expressed during embryogenesis (PubMed:23064028). Expressed in adults (PubMed:11733138).</text>
</comment>
<comment type="disruption phenotype">
    <text evidence="5">RNAi-mediated knockdown leads to embryonic lethality (PubMed:23064028). Increased and prolonged cortical contractility leading to a more persistent pseudocleavage in surviving embryos (PubMed:23064028). Decrease in rho-1 anterior cortex localization and increase in posterior cortex localization, leading to a loss of asymmetric rho-1 cortex localization during early embryonic cell division (PubMed:23064028). Increased cortical nmy-2 network between the foci, suggesting that the enhanced contractions are due to increased actomyosin contractility (PubMed:23064028). Reduction in the size of the anterior cortex and increase in the size of the posterior cortex during polarity establishment in the early embryo (PubMed:23064028). Leads to a delay in embryonic cell cycle progression (PubMed:23064028). Double RNAi-mediated knockdown with rho-1 results in loss of cortical contractility (PubMed:23064028).</text>
</comment>
<comment type="similarity">
    <text evidence="7">Belongs to the protein kinase superfamily. Ser/Thr protein kinase family. STE20 subfamily.</text>
</comment>
<evidence type="ECO:0000250" key="1">
    <source>
        <dbReference type="UniProtKB" id="Q0KHQ5"/>
    </source>
</evidence>
<evidence type="ECO:0000255" key="2">
    <source>
        <dbReference type="PROSITE-ProRule" id="PRU00159"/>
    </source>
</evidence>
<evidence type="ECO:0000256" key="3">
    <source>
        <dbReference type="SAM" id="MobiDB-lite"/>
    </source>
</evidence>
<evidence type="ECO:0000269" key="4">
    <source>
    </source>
</evidence>
<evidence type="ECO:0000269" key="5">
    <source>
    </source>
</evidence>
<evidence type="ECO:0000269" key="6">
    <source>
    </source>
</evidence>
<evidence type="ECO:0000305" key="7"/>
<sequence length="982" mass="112871">MAPAVLQKPGVIKDPSIAALFSNKDPEQRYQDLREIGHGSFGAVYFAYDKKNEQTVAIKKMNFSGKQAVEKWNDILKEVSFLNTVVHPHIVDYKACFLKDTTCWLVMEYCIGSAADIVDVLRKGMREVEIAAICSQTLDALRYLHSLKRIHRDIKAGNILLSDHAIVKLADFGSASLVDPAQTFIGTPFFMAPEVILAMDEGHYTDRADIWSLGITCIELAERRPPLFSMNAMSALYHIAQNDPPTLSPIDTSEQPEWSLEFVQFIDKCLRKPAEERMSAEECFRHPFIQRSRPSDTIQELIQRTKNMVLELDNFQYKKMRKLMYLDETEGKEGSEGNGASDDLDFHGNEANSIGRAGDSASSRSASLTSFRSMQSSGGAGLLVSTNTTGAMDNVHGSSGYGNGSSSTTSSARRRPPIPSQMLSSTSTSGVGTMPSHGSVGASITAIAVNPTPSPSEPIPTSQPTSKSESSSILETAHDDPLDTSIRAPVKDLHMPHRAVKERIATLQNHKFATLRSQRIINQEQEEYTKENNMYEQMSKYKHLRQAHHKELQQFEERCALDREQLRVKMDRELEQLTTTYSKEKMRVRCSQNNELDKRKKDIEDGEKKMKKTKNSQNQQQMKLYSAQQLKEYKYNKEAQKTRLRSLNMPRSTYENAMKEVKADLNRVKDARENDFDEKLRAELEDEIVRYRRQQLSNLHQLEEQLDDEDVNVQERQMDTRHGLLSKQHEMTRDLEIQHLNELHAMKKRHLETQHEAESASQNEYTQRQQDELRKKHAMQSRQQPRDLKIQEAQIRKQYRQVVKTQTRQFKLYLTQMVQVVPKDEQKELTSRLKQDQMQKVALLASQYESQIKKMVQDKTVKLESWQEDEQRVLSEKLEKELEELIAYQKKTRATLEEQIKKERTALEERIGTRRAMLEQKIIEEREQMGEMRRLKKEQIRDRHSQERHRLENHFVRTGSTSRSSGGIAPGVGNSSSIQMAM</sequence>
<organism>
    <name type="scientific">Caenorhabditis elegans</name>
    <dbReference type="NCBI Taxonomy" id="6239"/>
    <lineage>
        <taxon>Eukaryota</taxon>
        <taxon>Metazoa</taxon>
        <taxon>Ecdysozoa</taxon>
        <taxon>Nematoda</taxon>
        <taxon>Chromadorea</taxon>
        <taxon>Rhabditida</taxon>
        <taxon>Rhabditina</taxon>
        <taxon>Rhabditomorpha</taxon>
        <taxon>Rhabditoidea</taxon>
        <taxon>Rhabditidae</taxon>
        <taxon>Peloderinae</taxon>
        <taxon>Caenorhabditis</taxon>
    </lineage>
</organism>